<gene>
    <name evidence="6" type="primary">TPS21</name>
    <name evidence="7" type="synonym">PUP8</name>
    <name evidence="10" type="ordered locus">At5g23960</name>
    <name evidence="11" type="ORF">MZF18.16</name>
</gene>
<organism>
    <name type="scientific">Arabidopsis thaliana</name>
    <name type="common">Mouse-ear cress</name>
    <dbReference type="NCBI Taxonomy" id="3702"/>
    <lineage>
        <taxon>Eukaryota</taxon>
        <taxon>Viridiplantae</taxon>
        <taxon>Streptophyta</taxon>
        <taxon>Embryophyta</taxon>
        <taxon>Tracheophyta</taxon>
        <taxon>Spermatophyta</taxon>
        <taxon>Magnoliopsida</taxon>
        <taxon>eudicotyledons</taxon>
        <taxon>Gunneridae</taxon>
        <taxon>Pentapetalae</taxon>
        <taxon>rosids</taxon>
        <taxon>malvids</taxon>
        <taxon>Brassicales</taxon>
        <taxon>Brassicaceae</taxon>
        <taxon>Camelineae</taxon>
        <taxon>Arabidopsis</taxon>
    </lineage>
</organism>
<feature type="chain" id="PRO_0000348421" description="Alpha-humulene/(-)-(E)-beta-caryophyllene synthase">
    <location>
        <begin position="1"/>
        <end position="547"/>
    </location>
</feature>
<feature type="short sequence motif" description="DDXXD motif" evidence="9">
    <location>
        <begin position="299"/>
        <end position="303"/>
    </location>
</feature>
<feature type="binding site" evidence="1">
    <location>
        <position position="262"/>
    </location>
    <ligand>
        <name>(2E,6E)-farnesyl diphosphate</name>
        <dbReference type="ChEBI" id="CHEBI:175763"/>
    </ligand>
</feature>
<feature type="binding site" evidence="1">
    <location>
        <position position="299"/>
    </location>
    <ligand>
        <name>(2E,6E)-farnesyl diphosphate</name>
        <dbReference type="ChEBI" id="CHEBI:175763"/>
    </ligand>
</feature>
<feature type="binding site" evidence="1">
    <location>
        <position position="299"/>
    </location>
    <ligand>
        <name>Mg(2+)</name>
        <dbReference type="ChEBI" id="CHEBI:18420"/>
        <label>1</label>
    </ligand>
</feature>
<feature type="binding site" evidence="1">
    <location>
        <position position="299"/>
    </location>
    <ligand>
        <name>Mg(2+)</name>
        <dbReference type="ChEBI" id="CHEBI:18420"/>
        <label>2</label>
    </ligand>
</feature>
<feature type="binding site" evidence="1">
    <location>
        <position position="303"/>
    </location>
    <ligand>
        <name>(2E,6E)-farnesyl diphosphate</name>
        <dbReference type="ChEBI" id="CHEBI:175763"/>
    </ligand>
</feature>
<feature type="binding site" evidence="1">
    <location>
        <position position="303"/>
    </location>
    <ligand>
        <name>Mg(2+)</name>
        <dbReference type="ChEBI" id="CHEBI:18420"/>
        <label>1</label>
    </ligand>
</feature>
<feature type="binding site" evidence="1">
    <location>
        <position position="303"/>
    </location>
    <ligand>
        <name>Mg(2+)</name>
        <dbReference type="ChEBI" id="CHEBI:18420"/>
        <label>2</label>
    </ligand>
</feature>
<feature type="binding site" evidence="1">
    <location>
        <position position="442"/>
    </location>
    <ligand>
        <name>(2E,6E)-farnesyl diphosphate</name>
        <dbReference type="ChEBI" id="CHEBI:175763"/>
    </ligand>
</feature>
<feature type="binding site" evidence="1">
    <location>
        <position position="445"/>
    </location>
    <ligand>
        <name>(2E,6E)-farnesyl diphosphate</name>
        <dbReference type="ChEBI" id="CHEBI:175763"/>
    </ligand>
</feature>
<feature type="binding site" evidence="1">
    <location>
        <position position="445"/>
    </location>
    <ligand>
        <name>Mg(2+)</name>
        <dbReference type="ChEBI" id="CHEBI:18420"/>
        <label>3</label>
    </ligand>
</feature>
<feature type="binding site" evidence="1">
    <location>
        <position position="446"/>
    </location>
    <ligand>
        <name>Mg(2+)</name>
        <dbReference type="ChEBI" id="CHEBI:18420"/>
        <label>3</label>
    </ligand>
</feature>
<feature type="binding site" evidence="1">
    <location>
        <position position="449"/>
    </location>
    <ligand>
        <name>Mg(2+)</name>
        <dbReference type="ChEBI" id="CHEBI:18420"/>
        <label>3</label>
    </ligand>
</feature>
<feature type="binding site" evidence="1">
    <location>
        <position position="453"/>
    </location>
    <ligand>
        <name>Mg(2+)</name>
        <dbReference type="ChEBI" id="CHEBI:18420"/>
        <label>3</label>
    </ligand>
</feature>
<feature type="splice variant" id="VSP_041593" description="In isoform 2." evidence="7">
    <original>WLPVVPDE</original>
    <variation>YSICNI</variation>
    <location>
        <begin position="321"/>
        <end position="328"/>
    </location>
</feature>
<feature type="sequence conflict" description="In Ref. 1; AAO85539." evidence="9" ref="1">
    <original>Y</original>
    <variation>C</variation>
    <location>
        <position position="73"/>
    </location>
</feature>
<feature type="sequence conflict" description="In Ref. 1; AAO85539." evidence="9" ref="1">
    <original>A</original>
    <variation>G</variation>
    <location>
        <position position="406"/>
    </location>
</feature>
<feature type="sequence conflict" description="In Ref. 1; AAO85539." evidence="9" ref="1">
    <original>S</original>
    <variation>N</variation>
    <location>
        <position position="428"/>
    </location>
</feature>
<dbReference type="EC" id="4.2.3.-" evidence="4"/>
<dbReference type="EC" id="4.2.3.57" evidence="4"/>
<dbReference type="EC" id="4.2.3.133" evidence="4"/>
<dbReference type="EC" id="4.2.3.104" evidence="4"/>
<dbReference type="EMBL" id="AF497491">
    <property type="protein sequence ID" value="AAO85539.1"/>
    <property type="molecule type" value="mRNA"/>
</dbReference>
<dbReference type="EMBL" id="AJ544238">
    <property type="protein sequence ID" value="CAD66638.1"/>
    <property type="molecule type" value="mRNA"/>
</dbReference>
<dbReference type="EMBL" id="AB009056">
    <property type="protein sequence ID" value="BAB08719.1"/>
    <property type="status" value="ALT_SEQ"/>
    <property type="molecule type" value="Genomic_DNA"/>
</dbReference>
<dbReference type="EMBL" id="CP002688">
    <property type="protein sequence ID" value="AED93238.1"/>
    <property type="molecule type" value="Genomic_DNA"/>
</dbReference>
<dbReference type="EMBL" id="CP002688">
    <property type="protein sequence ID" value="AED93239.1"/>
    <property type="molecule type" value="Genomic_DNA"/>
</dbReference>
<dbReference type="RefSeq" id="NP_001190374.1">
    <molecule id="Q84UU4-2"/>
    <property type="nucleotide sequence ID" value="NM_001203445.1"/>
</dbReference>
<dbReference type="RefSeq" id="NP_197784.2">
    <molecule id="Q84UU4-1"/>
    <property type="nucleotide sequence ID" value="NM_122301.4"/>
</dbReference>
<dbReference type="SMR" id="Q84UU4"/>
<dbReference type="FunCoup" id="Q84UU4">
    <property type="interactions" value="31"/>
</dbReference>
<dbReference type="STRING" id="3702.Q84UU4"/>
<dbReference type="PaxDb" id="3702-AT5G23960.1"/>
<dbReference type="ProteomicsDB" id="232122">
    <molecule id="Q84UU4-1"/>
</dbReference>
<dbReference type="EnsemblPlants" id="AT5G23960.1">
    <molecule id="Q84UU4-1"/>
    <property type="protein sequence ID" value="AT5G23960.1"/>
    <property type="gene ID" value="AT5G23960"/>
</dbReference>
<dbReference type="EnsemblPlants" id="AT5G23960.2">
    <molecule id="Q84UU4-2"/>
    <property type="protein sequence ID" value="AT5G23960.2"/>
    <property type="gene ID" value="AT5G23960"/>
</dbReference>
<dbReference type="GeneID" id="832461"/>
<dbReference type="Gramene" id="AT5G23960.1">
    <molecule id="Q84UU4-1"/>
    <property type="protein sequence ID" value="AT5G23960.1"/>
    <property type="gene ID" value="AT5G23960"/>
</dbReference>
<dbReference type="Gramene" id="AT5G23960.2">
    <molecule id="Q84UU4-2"/>
    <property type="protein sequence ID" value="AT5G23960.2"/>
    <property type="gene ID" value="AT5G23960"/>
</dbReference>
<dbReference type="KEGG" id="ath:AT5G23960"/>
<dbReference type="Araport" id="AT5G23960"/>
<dbReference type="TAIR" id="AT5G23960">
    <property type="gene designation" value="TPS21"/>
</dbReference>
<dbReference type="eggNOG" id="ENOG502QUCN">
    <property type="taxonomic scope" value="Eukaryota"/>
</dbReference>
<dbReference type="HOGENOM" id="CLU_003125_7_2_1"/>
<dbReference type="InParanoid" id="Q84UU4"/>
<dbReference type="OMA" id="THGEDIM"/>
<dbReference type="PhylomeDB" id="Q84UU4"/>
<dbReference type="BioCyc" id="ARA:AT5G23960-MONOMER"/>
<dbReference type="BioCyc" id="MetaCyc:AT5G23960-MONOMER"/>
<dbReference type="BRENDA" id="4.2.3.57">
    <property type="organism ID" value="399"/>
</dbReference>
<dbReference type="SABIO-RK" id="Q84UU4"/>
<dbReference type="UniPathway" id="UPA00213"/>
<dbReference type="PRO" id="PR:Q84UU4"/>
<dbReference type="Proteomes" id="UP000006548">
    <property type="component" value="Chromosome 5"/>
</dbReference>
<dbReference type="ExpressionAtlas" id="Q84UU4">
    <property type="expression patterns" value="baseline and differential"/>
</dbReference>
<dbReference type="GO" id="GO:0005737">
    <property type="term" value="C:cytoplasm"/>
    <property type="evidence" value="ECO:0007669"/>
    <property type="project" value="UniProtKB-SubCell"/>
</dbReference>
<dbReference type="GO" id="GO:0080016">
    <property type="term" value="F:(-)-E-beta-caryophyllene synthase activity"/>
    <property type="evidence" value="ECO:0000314"/>
    <property type="project" value="TAIR"/>
</dbReference>
<dbReference type="GO" id="GO:0080017">
    <property type="term" value="F:alpha-humulene synthase activity"/>
    <property type="evidence" value="ECO:0000314"/>
    <property type="project" value="TAIR"/>
</dbReference>
<dbReference type="GO" id="GO:0000287">
    <property type="term" value="F:magnesium ion binding"/>
    <property type="evidence" value="ECO:0007669"/>
    <property type="project" value="InterPro"/>
</dbReference>
<dbReference type="GO" id="GO:0016102">
    <property type="term" value="P:diterpenoid biosynthetic process"/>
    <property type="evidence" value="ECO:0007669"/>
    <property type="project" value="InterPro"/>
</dbReference>
<dbReference type="GO" id="GO:0080027">
    <property type="term" value="P:response to herbivore"/>
    <property type="evidence" value="ECO:0000270"/>
    <property type="project" value="UniProtKB"/>
</dbReference>
<dbReference type="GO" id="GO:0051762">
    <property type="term" value="P:sesquiterpene biosynthetic process"/>
    <property type="evidence" value="ECO:0000314"/>
    <property type="project" value="TAIR"/>
</dbReference>
<dbReference type="GO" id="GO:0016106">
    <property type="term" value="P:sesquiterpenoid biosynthetic process"/>
    <property type="evidence" value="ECO:0000314"/>
    <property type="project" value="TAIR"/>
</dbReference>
<dbReference type="CDD" id="cd00684">
    <property type="entry name" value="Terpene_cyclase_plant_C1"/>
    <property type="match status" value="1"/>
</dbReference>
<dbReference type="FunFam" id="1.10.600.10:FF:000007">
    <property type="entry name" value="Isoprene synthase, chloroplastic"/>
    <property type="match status" value="1"/>
</dbReference>
<dbReference type="FunFam" id="1.50.10.130:FF:000001">
    <property type="entry name" value="Isoprene synthase, chloroplastic"/>
    <property type="match status" value="1"/>
</dbReference>
<dbReference type="Gene3D" id="1.10.600.10">
    <property type="entry name" value="Farnesyl Diphosphate Synthase"/>
    <property type="match status" value="1"/>
</dbReference>
<dbReference type="Gene3D" id="1.50.10.130">
    <property type="entry name" value="Terpene synthase, N-terminal domain"/>
    <property type="match status" value="1"/>
</dbReference>
<dbReference type="InterPro" id="IPR008949">
    <property type="entry name" value="Isoprenoid_synthase_dom_sf"/>
</dbReference>
<dbReference type="InterPro" id="IPR034741">
    <property type="entry name" value="Terpene_cyclase-like_1_C"/>
</dbReference>
<dbReference type="InterPro" id="IPR044814">
    <property type="entry name" value="Terpene_cyclase_plant_C1"/>
</dbReference>
<dbReference type="InterPro" id="IPR001906">
    <property type="entry name" value="Terpene_synth_N"/>
</dbReference>
<dbReference type="InterPro" id="IPR036965">
    <property type="entry name" value="Terpene_synth_N_sf"/>
</dbReference>
<dbReference type="InterPro" id="IPR050148">
    <property type="entry name" value="Terpene_synthase-like"/>
</dbReference>
<dbReference type="InterPro" id="IPR005630">
    <property type="entry name" value="Terpene_synthase_metal-bd"/>
</dbReference>
<dbReference type="InterPro" id="IPR008930">
    <property type="entry name" value="Terpenoid_cyclase/PrenylTrfase"/>
</dbReference>
<dbReference type="PANTHER" id="PTHR31225:SF93">
    <property type="entry name" value="ALPHA-HUMULENE_(-)-(E)-BETA-CARYOPHYLLENE SYNTHASE"/>
    <property type="match status" value="1"/>
</dbReference>
<dbReference type="PANTHER" id="PTHR31225">
    <property type="entry name" value="OS04G0344100 PROTEIN-RELATED"/>
    <property type="match status" value="1"/>
</dbReference>
<dbReference type="Pfam" id="PF01397">
    <property type="entry name" value="Terpene_synth"/>
    <property type="match status" value="1"/>
</dbReference>
<dbReference type="Pfam" id="PF03936">
    <property type="entry name" value="Terpene_synth_C"/>
    <property type="match status" value="1"/>
</dbReference>
<dbReference type="SFLD" id="SFLDS00005">
    <property type="entry name" value="Isoprenoid_Synthase_Type_I"/>
    <property type="match status" value="1"/>
</dbReference>
<dbReference type="SFLD" id="SFLDG01019">
    <property type="entry name" value="Terpene_Cyclase_Like_1_C_Termi"/>
    <property type="match status" value="1"/>
</dbReference>
<dbReference type="SUPFAM" id="SSF48239">
    <property type="entry name" value="Terpenoid cyclases/Protein prenyltransferases"/>
    <property type="match status" value="1"/>
</dbReference>
<dbReference type="SUPFAM" id="SSF48576">
    <property type="entry name" value="Terpenoid synthases"/>
    <property type="match status" value="1"/>
</dbReference>
<accession>Q84UU4</accession>
<accession>Q84YI3</accession>
<accession>Q9FLW5</accession>
<sequence>MGSEVNRPLADFPANIWEDPLTSFSKSDLGTETFKEKHSTLKEAVKEAFMSSKANPIENIKFIDALCRLGVSYHFEKDIVEQLDKSFDCLDFPQMVRQEGCDLYTVGIIFQVFRQFGFKLSADVFEKFKDENGKFKGHLVTDAYGMLSLYEAAQWGTHGEDIIDEALAFSRSHLEEISSRSSPHLAIRIKNALKHPYHKGISRIETRQYISYYEEEESCDPTLLEFAKIDFNLLQILHREELACVTRWHHEMEFKSKVTYTRHRITEAYLWSLGTYFEPQYSQARVITTMALILFTALDDMYDAYGTMEELELFTDAMDEWLPVVPDEIPIPDSMKFIYNVTVEFYDKLDEELEKEGRSGCGFHLKKSLQKTANGYMQEAKWLKKDYIATFDEYKENAILSSGYYALIAMTFVRMTDVAKLDAFEWLSSHPKIRVASEIISRFTDDISSYEFEHKREHVATGIDCYMQQFGVSKERAVEVMGNIVSDAWKDLNQELMRPHVFPFPLLMRVLNLSRVIDVFYRYQDAYTNPKLLKEHIVSLLIETIPI</sequence>
<comment type="function">
    <text evidence="2 4">Involved in sesquiterpene (C15) biosynthesis. The major products are beta-caryophyllene and alpha-humulene. Does not convert geranyl diphosphate (GPP) to any monoterpenes.</text>
</comment>
<comment type="catalytic activity">
    <reaction evidence="4">
        <text>(2E,6E)-farnesyl diphosphate = (-)-(E)-beta-caryophyllene + diphosphate</text>
        <dbReference type="Rhea" id="RHEA:28294"/>
        <dbReference type="ChEBI" id="CHEBI:10357"/>
        <dbReference type="ChEBI" id="CHEBI:33019"/>
        <dbReference type="ChEBI" id="CHEBI:175763"/>
        <dbReference type="EC" id="4.2.3.57"/>
    </reaction>
    <physiologicalReaction direction="left-to-right" evidence="4">
        <dbReference type="Rhea" id="RHEA:28295"/>
    </physiologicalReaction>
</comment>
<comment type="catalytic activity">
    <reaction evidence="4">
        <text>(2E,6E)-farnesyl diphosphate = alpha-copaene + diphosphate</text>
        <dbReference type="Rhea" id="RHEA:33991"/>
        <dbReference type="ChEBI" id="CHEBI:10221"/>
        <dbReference type="ChEBI" id="CHEBI:33019"/>
        <dbReference type="ChEBI" id="CHEBI:175763"/>
        <dbReference type="EC" id="4.2.3.133"/>
    </reaction>
    <physiologicalReaction direction="left-to-right" evidence="4">
        <dbReference type="Rhea" id="RHEA:33992"/>
    </physiologicalReaction>
</comment>
<comment type="catalytic activity">
    <reaction evidence="4">
        <text>(2E,6E)-farnesyl diphosphate = alpha-humulene + diphosphate</text>
        <dbReference type="Rhea" id="RHEA:31895"/>
        <dbReference type="ChEBI" id="CHEBI:5768"/>
        <dbReference type="ChEBI" id="CHEBI:33019"/>
        <dbReference type="ChEBI" id="CHEBI:175763"/>
        <dbReference type="EC" id="4.2.3.104"/>
    </reaction>
    <physiologicalReaction direction="left-to-right" evidence="4">
        <dbReference type="Rhea" id="RHEA:31896"/>
    </physiologicalReaction>
</comment>
<comment type="catalytic activity">
    <reaction evidence="4">
        <text>(2E,6E)-farnesyl diphosphate = (1S,2S,4R)-beta-elemene + diphosphate</text>
        <dbReference type="Rhea" id="RHEA:68712"/>
        <dbReference type="ChEBI" id="CHEBI:33019"/>
        <dbReference type="ChEBI" id="CHEBI:62855"/>
        <dbReference type="ChEBI" id="CHEBI:175763"/>
    </reaction>
    <physiologicalReaction direction="left-to-right" evidence="4">
        <dbReference type="Rhea" id="RHEA:68713"/>
    </physiologicalReaction>
</comment>
<comment type="cofactor">
    <cofactor evidence="1">
        <name>Mg(2+)</name>
        <dbReference type="ChEBI" id="CHEBI:18420"/>
    </cofactor>
    <cofactor evidence="1">
        <name>Mn(2+)</name>
        <dbReference type="ChEBI" id="CHEBI:29035"/>
    </cofactor>
    <text evidence="1">Binds 3 Mg(2+) or Mn(2+) ions per subunit.</text>
</comment>
<comment type="biophysicochemical properties">
    <kinetics>
        <KM evidence="4">2.1 uM for farnesyl diphosphate</KM>
    </kinetics>
</comment>
<comment type="pathway">
    <text evidence="4">Secondary metabolite biosynthesis; terpenoid biosynthesis.</text>
</comment>
<comment type="subunit">
    <text evidence="1">Monomer.</text>
</comment>
<comment type="subcellular location">
    <subcellularLocation>
        <location evidence="9">Cytoplasm</location>
    </subcellularLocation>
</comment>
<comment type="alternative products">
    <event type="alternative splicing"/>
    <isoform>
        <id>Q84UU4-1</id>
        <name>1</name>
        <sequence type="displayed"/>
    </isoform>
    <isoform>
        <id>Q84UU4-2</id>
        <name>2</name>
        <sequence type="described" ref="VSP_041593"/>
    </isoform>
</comment>
<comment type="tissue specificity">
    <text evidence="2 3 4">Expressed exclusively in flowers. Expressed in the flower stigmata and also detected in the mesocarp cell layers of the silique wall.</text>
</comment>
<comment type="induction">
    <text evidence="5">Induced in response to the caterpillar P.xylostella feeding.</text>
</comment>
<comment type="domain">
    <text evidence="9">The Asp-Asp-Xaa-Xaa-Asp/Glu (DDXXD/E) motif is important for the catalytic activity, presumably through binding to Mg(2+).</text>
</comment>
<comment type="disruption phenotype">
    <text evidence="4">Does not emit (E)-beta-caryophyllene, alpha-copaene and alpha-humulene.</text>
</comment>
<comment type="similarity">
    <text evidence="9">Belongs to the terpene synthase family. Tpsa subfamily.</text>
</comment>
<comment type="sequence caution" evidence="9">
    <conflict type="erroneous gene model prediction">
        <sequence resource="EMBL-CDS" id="BAB08719"/>
    </conflict>
</comment>
<reference key="1">
    <citation type="journal article" date="2003" name="Plant Cell">
        <title>Biosynthesis and emission of terpenoid volatiles from Arabidopsis flowers.</title>
        <authorList>
            <person name="Chen F."/>
            <person name="Tholl D."/>
            <person name="D'Auria J.C."/>
            <person name="Farooq A."/>
            <person name="Pichersky E."/>
            <person name="Gershenzon J."/>
        </authorList>
    </citation>
    <scope>NUCLEOTIDE SEQUENCE [MRNA] (ISOFORM 1)</scope>
    <scope>FUNCTION</scope>
    <scope>TISSUE SPECIFICITY</scope>
    <source>
        <strain>cv. Landsberg erecta</strain>
    </source>
</reference>
<reference key="2">
    <citation type="journal article" date="2003" name="Plant Physiol.">
        <title>The identification of candidate genes for a reverse genetic analysis of development and function in the Arabidopsis gynoecium.</title>
        <authorList>
            <person name="Scutt C.P."/>
            <person name="Vinauger-Douard M."/>
            <person name="Fourquin C."/>
            <person name="Ailhas J."/>
            <person name="Kuno N."/>
            <person name="Uchida K."/>
            <person name="Gaude T."/>
            <person name="Furuya M."/>
            <person name="Dumas C."/>
        </authorList>
    </citation>
    <scope>NUCLEOTIDE SEQUENCE [MRNA] (ISOFORM 2)</scope>
    <scope>TISSUE SPECIFICITY</scope>
    <source>
        <strain>cv. Landsberg erecta</strain>
        <tissue>Flower</tissue>
    </source>
</reference>
<reference key="3">
    <citation type="journal article" date="1998" name="DNA Res.">
        <title>Structural analysis of Arabidopsis thaliana chromosome 5. IV. Sequence features of the regions of 1,456,315 bp covered by nineteen physically assigned P1 and TAC clones.</title>
        <authorList>
            <person name="Sato S."/>
            <person name="Kaneko T."/>
            <person name="Kotani H."/>
            <person name="Nakamura Y."/>
            <person name="Asamizu E."/>
            <person name="Miyajima N."/>
            <person name="Tabata S."/>
        </authorList>
    </citation>
    <scope>NUCLEOTIDE SEQUENCE [LARGE SCALE GENOMIC DNA]</scope>
    <source>
        <strain>cv. Columbia</strain>
    </source>
</reference>
<reference key="4">
    <citation type="journal article" date="2017" name="Plant J.">
        <title>Araport11: a complete reannotation of the Arabidopsis thaliana reference genome.</title>
        <authorList>
            <person name="Cheng C.Y."/>
            <person name="Krishnakumar V."/>
            <person name="Chan A.P."/>
            <person name="Thibaud-Nissen F."/>
            <person name="Schobel S."/>
            <person name="Town C.D."/>
        </authorList>
    </citation>
    <scope>GENOME REANNOTATION</scope>
    <source>
        <strain>cv. Columbia</strain>
    </source>
</reference>
<reference key="5">
    <citation type="journal article" date="2002" name="Mol. Genet. Genomics">
        <title>Genomic analysis of the terpenoid synthase (AtTPS) gene family of Arabidopsis thaliana.</title>
        <authorList>
            <person name="Aubourg S."/>
            <person name="Lecharny A."/>
            <person name="Bohlmann J."/>
        </authorList>
    </citation>
    <scope>GENE FAMILY</scope>
    <scope>NOMENCLATURE</scope>
</reference>
<reference key="6">
    <citation type="journal article" date="2003" name="Plant Mol. Biol.">
        <title>Genome organization in Arabidopsis thaliana: a survey for genes involved in isoprenoid and chlorophyll metabolism.</title>
        <authorList>
            <person name="Lange B.M."/>
            <person name="Ghassemian M."/>
        </authorList>
    </citation>
    <scope>GENE FAMILY</scope>
</reference>
<reference key="7">
    <citation type="journal article" date="2005" name="Plant J.">
        <title>Two sesquiterpene synthases are responsible for the complex mixture of sesquiterpenes emitted from Arabidopsis flowers.</title>
        <authorList>
            <person name="Tholl D."/>
            <person name="Chen F."/>
            <person name="Petri J."/>
            <person name="Gershenzon J."/>
            <person name="Pichersky E."/>
        </authorList>
    </citation>
    <scope>FUNCTION</scope>
    <scope>TISSUE SPECIFICITY</scope>
    <scope>DISRUPTION PHENOTYPE</scope>
    <scope>BIOPHYSICOCHEMICAL PROPERTIES</scope>
    <scope>CATALYTIC ACTIVITY</scope>
    <scope>PATHWAY</scope>
</reference>
<reference key="8">
    <citation type="journal article" date="2008" name="BMC Genomics">
        <title>Comparative transcriptome analysis of Arabidopsis thaliana infested by diamond back moth (Plutella xylostella) larvae reveals signatures of stress response, secondary metabolism, and signalling.</title>
        <authorList>
            <person name="Ehlting J."/>
            <person name="Chowrira S.G."/>
            <person name="Mattheus N."/>
            <person name="Aeschliman D.S."/>
            <person name="Arimura G."/>
            <person name="Bohlmann J."/>
        </authorList>
    </citation>
    <scope>INDUCTION BY HERBIVORY</scope>
</reference>
<protein>
    <recommendedName>
        <fullName evidence="8">Alpha-humulene/(-)-(E)-beta-caryophyllene synthase</fullName>
        <ecNumber evidence="4">4.2.3.-</ecNumber>
    </recommendedName>
    <alternativeName>
        <fullName>(E)-beta-caryophyllene synthase</fullName>
        <ecNumber evidence="4">4.2.3.57</ecNumber>
    </alternativeName>
    <alternativeName>
        <fullName>Alpha-copaene synthase</fullName>
        <ecNumber evidence="4">4.2.3.133</ecNumber>
    </alternativeName>
    <alternativeName>
        <fullName>Alpha-humulene synthase</fullName>
        <ecNumber evidence="4">4.2.3.104</ecNumber>
    </alternativeName>
    <alternativeName>
        <fullName evidence="6">Terpenoid synthase 21</fullName>
        <shortName evidence="6">AtTPS21</shortName>
    </alternativeName>
</protein>
<name>HUMS_ARATH</name>
<keyword id="KW-0025">Alternative splicing</keyword>
<keyword id="KW-0963">Cytoplasm</keyword>
<keyword id="KW-0456">Lyase</keyword>
<keyword id="KW-0460">Magnesium</keyword>
<keyword id="KW-0464">Manganese</keyword>
<keyword id="KW-0479">Metal-binding</keyword>
<keyword id="KW-1185">Reference proteome</keyword>
<proteinExistence type="evidence at protein level"/>
<evidence type="ECO:0000250" key="1">
    <source>
        <dbReference type="UniProtKB" id="Q40577"/>
    </source>
</evidence>
<evidence type="ECO:0000269" key="2">
    <source>
    </source>
</evidence>
<evidence type="ECO:0000269" key="3">
    <source>
    </source>
</evidence>
<evidence type="ECO:0000269" key="4">
    <source>
    </source>
</evidence>
<evidence type="ECO:0000269" key="5">
    <source>
    </source>
</evidence>
<evidence type="ECO:0000303" key="6">
    <source>
    </source>
</evidence>
<evidence type="ECO:0000303" key="7">
    <source>
    </source>
</evidence>
<evidence type="ECO:0000303" key="8">
    <source>
    </source>
</evidence>
<evidence type="ECO:0000305" key="9"/>
<evidence type="ECO:0000312" key="10">
    <source>
        <dbReference type="Araport" id="AT5G23960"/>
    </source>
</evidence>
<evidence type="ECO:0000312" key="11">
    <source>
        <dbReference type="EMBL" id="BAB08719.1"/>
    </source>
</evidence>